<organism>
    <name type="scientific">Haloarcula marismortui (strain ATCC 43049 / DSM 3752 / JCM 8966 / VKM B-1809)</name>
    <name type="common">Halobacterium marismortui</name>
    <dbReference type="NCBI Taxonomy" id="272569"/>
    <lineage>
        <taxon>Archaea</taxon>
        <taxon>Methanobacteriati</taxon>
        <taxon>Methanobacteriota</taxon>
        <taxon>Stenosarchaea group</taxon>
        <taxon>Halobacteria</taxon>
        <taxon>Halobacteriales</taxon>
        <taxon>Haloarculaceae</taxon>
        <taxon>Haloarcula</taxon>
    </lineage>
</organism>
<proteinExistence type="evidence at protein level"/>
<comment type="similarity">
    <text evidence="2">Belongs to the eukaryotic ribosomal protein eS17 family.</text>
</comment>
<evidence type="ECO:0000269" key="1">
    <source>
    </source>
</evidence>
<evidence type="ECO:0000305" key="2"/>
<dbReference type="EMBL" id="AY596297">
    <property type="protein sequence ID" value="AAV45137.1"/>
    <property type="molecule type" value="Genomic_DNA"/>
</dbReference>
<dbReference type="PIR" id="S63968">
    <property type="entry name" value="S63968"/>
</dbReference>
<dbReference type="RefSeq" id="WP_004516807.1">
    <property type="nucleotide sequence ID" value="NZ_CP039138.1"/>
</dbReference>
<dbReference type="SMR" id="Q5V5R5"/>
<dbReference type="STRING" id="272569.rrnAC0055"/>
<dbReference type="PaxDb" id="272569-rrnAC0055"/>
<dbReference type="EnsemblBacteria" id="AAV45137">
    <property type="protein sequence ID" value="AAV45137"/>
    <property type="gene ID" value="rrnAC0055"/>
</dbReference>
<dbReference type="KEGG" id="hma:rrnAC0055"/>
<dbReference type="PATRIC" id="fig|272569.17.peg.865"/>
<dbReference type="eggNOG" id="arCOG01885">
    <property type="taxonomic scope" value="Archaea"/>
</dbReference>
<dbReference type="HOGENOM" id="CLU_176720_1_0_2"/>
<dbReference type="Proteomes" id="UP000001169">
    <property type="component" value="Chromosome I"/>
</dbReference>
<dbReference type="GO" id="GO:0005829">
    <property type="term" value="C:cytosol"/>
    <property type="evidence" value="ECO:0007669"/>
    <property type="project" value="UniProtKB-ARBA"/>
</dbReference>
<dbReference type="GO" id="GO:1990904">
    <property type="term" value="C:ribonucleoprotein complex"/>
    <property type="evidence" value="ECO:0007669"/>
    <property type="project" value="UniProtKB-KW"/>
</dbReference>
<dbReference type="GO" id="GO:0005840">
    <property type="term" value="C:ribosome"/>
    <property type="evidence" value="ECO:0007669"/>
    <property type="project" value="UniProtKB-KW"/>
</dbReference>
<dbReference type="GO" id="GO:0003735">
    <property type="term" value="F:structural constituent of ribosome"/>
    <property type="evidence" value="ECO:0007669"/>
    <property type="project" value="InterPro"/>
</dbReference>
<dbReference type="GO" id="GO:0006412">
    <property type="term" value="P:translation"/>
    <property type="evidence" value="ECO:0007669"/>
    <property type="project" value="UniProtKB-UniRule"/>
</dbReference>
<dbReference type="Gene3D" id="1.10.60.20">
    <property type="entry name" value="Ribosomal protein S17e-like"/>
    <property type="match status" value="1"/>
</dbReference>
<dbReference type="HAMAP" id="MF_00511">
    <property type="entry name" value="Ribosomal_eS17"/>
    <property type="match status" value="1"/>
</dbReference>
<dbReference type="InterPro" id="IPR001210">
    <property type="entry name" value="Ribosomal_eS17"/>
</dbReference>
<dbReference type="InterPro" id="IPR018273">
    <property type="entry name" value="Ribosomal_eS17_CS"/>
</dbReference>
<dbReference type="InterPro" id="IPR036401">
    <property type="entry name" value="Ribosomal_eS17_sf"/>
</dbReference>
<dbReference type="NCBIfam" id="NF002242">
    <property type="entry name" value="PRK01151.1"/>
    <property type="match status" value="1"/>
</dbReference>
<dbReference type="PANTHER" id="PTHR10732">
    <property type="entry name" value="40S RIBOSOMAL PROTEIN S17"/>
    <property type="match status" value="1"/>
</dbReference>
<dbReference type="PANTHER" id="PTHR10732:SF0">
    <property type="entry name" value="40S RIBOSOMAL PROTEIN S17"/>
    <property type="match status" value="1"/>
</dbReference>
<dbReference type="Pfam" id="PF00833">
    <property type="entry name" value="Ribosomal_S17e"/>
    <property type="match status" value="1"/>
</dbReference>
<dbReference type="SUPFAM" id="SSF116820">
    <property type="entry name" value="Rps17e-like"/>
    <property type="match status" value="1"/>
</dbReference>
<dbReference type="PROSITE" id="PS00712">
    <property type="entry name" value="RIBOSOMAL_S17E"/>
    <property type="match status" value="1"/>
</dbReference>
<sequence>MAIKPAYVKKTGTLLMERYPDAFGADFEHNKDVVEELTNIESKGVRNRIAGYVTRKMNNPVEA</sequence>
<name>RS17E_HALMA</name>
<feature type="initiator methionine" description="Removed" evidence="1">
    <location>
        <position position="1"/>
    </location>
</feature>
<feature type="chain" id="PRO_0000141550" description="Small ribosomal subunit protein eS17">
    <location>
        <begin position="2"/>
        <end position="63"/>
    </location>
</feature>
<reference key="1">
    <citation type="journal article" date="2004" name="Genome Res.">
        <title>Genome sequence of Haloarcula marismortui: a halophilic archaeon from the Dead Sea.</title>
        <authorList>
            <person name="Baliga N.S."/>
            <person name="Bonneau R."/>
            <person name="Facciotti M.T."/>
            <person name="Pan M."/>
            <person name="Glusman G."/>
            <person name="Deutsch E.W."/>
            <person name="Shannon P."/>
            <person name="Chiu Y."/>
            <person name="Weng R.S."/>
            <person name="Gan R.R."/>
            <person name="Hung P."/>
            <person name="Date S.V."/>
            <person name="Marcotte E."/>
            <person name="Hood L."/>
            <person name="Ng W.V."/>
        </authorList>
    </citation>
    <scope>NUCLEOTIDE SEQUENCE [LARGE SCALE GENOMIC DNA]</scope>
    <source>
        <strain>ATCC 43049 / DSM 3752 / JCM 8966 / VKM B-1809</strain>
    </source>
</reference>
<reference key="2">
    <citation type="journal article" date="1995" name="Eur. J. Biochem.">
        <title>Cartography of ribosomal proteins of the 30S subunit from the halophilic Haloarcula marismortui and complete sequence analysis of protein HS26.</title>
        <authorList>
            <person name="Engemann S."/>
            <person name="Noelle R."/>
            <person name="Herfurth E."/>
            <person name="Briesemeister U."/>
            <person name="Grelle G."/>
            <person name="Wittmann-Liebold B."/>
        </authorList>
    </citation>
    <scope>PROTEIN SEQUENCE OF 2-63</scope>
</reference>
<keyword id="KW-0903">Direct protein sequencing</keyword>
<keyword id="KW-1185">Reference proteome</keyword>
<keyword id="KW-0687">Ribonucleoprotein</keyword>
<keyword id="KW-0689">Ribosomal protein</keyword>
<gene>
    <name type="primary">rps17e</name>
    <name type="ordered locus">rrnAC0055</name>
</gene>
<protein>
    <recommendedName>
        <fullName evidence="2">Small ribosomal subunit protein eS17</fullName>
    </recommendedName>
    <alternativeName>
        <fullName>30S ribosomal protein S17e</fullName>
    </alternativeName>
    <alternativeName>
        <fullName>Ribosomal protein HS26</fullName>
    </alternativeName>
</protein>
<accession>Q5V5R5</accession>
<accession>Q7M545</accession>